<comment type="function">
    <text evidence="1">Two distinct, membrane-bound, FAD-containing enzymes are responsible for the catalysis of fumarate and succinate interconversion; fumarate reductase is used in anaerobic growth, and succinate dehydrogenase is used in aerobic growth. Anchors the catalytic components of the fumarate reductase complex to the cell inner membrane, binds quinones.</text>
</comment>
<comment type="subunit">
    <text evidence="1">Part of an enzyme complex containing four subunits: a flavoprotein (FrdA), an iron-sulfur protein (FrdB), and two hydrophobic anchor proteins (FrdC and FrdD).</text>
</comment>
<comment type="subcellular location">
    <subcellularLocation>
        <location evidence="1">Cell inner membrane</location>
        <topology evidence="1">Multi-pass membrane protein</topology>
    </subcellularLocation>
</comment>
<comment type="similarity">
    <text evidence="1">Belongs to the FrdC family.</text>
</comment>
<name>FRDC_SALHS</name>
<gene>
    <name evidence="1" type="primary">frdC</name>
    <name type="ordered locus">SeHA_C4759</name>
</gene>
<sequence length="131" mass="15030">MTTKRKPYVRPMTSTWWKKLPFYRFYMLREGTAVPAVWFSIELIFGLFALKHGAESWMGFVGFLQNPVVVILNLITLAAALLHTKTWFELTPKAANIIVKDEKMGPEPIIKGLWVVTAVVTVVILYVALFW</sequence>
<feature type="chain" id="PRO_1000132384" description="Fumarate reductase subunit C">
    <location>
        <begin position="1"/>
        <end position="131"/>
    </location>
</feature>
<feature type="transmembrane region" description="Helical" evidence="1">
    <location>
        <begin position="30"/>
        <end position="50"/>
    </location>
</feature>
<feature type="transmembrane region" description="Helical" evidence="1">
    <location>
        <begin position="57"/>
        <end position="77"/>
    </location>
</feature>
<feature type="transmembrane region" description="Helical" evidence="1">
    <location>
        <begin position="109"/>
        <end position="129"/>
    </location>
</feature>
<dbReference type="EMBL" id="CP001120">
    <property type="protein sequence ID" value="ACF66652.1"/>
    <property type="molecule type" value="Genomic_DNA"/>
</dbReference>
<dbReference type="RefSeq" id="WP_000208750.1">
    <property type="nucleotide sequence ID" value="NC_011083.1"/>
</dbReference>
<dbReference type="SMR" id="B4TF89"/>
<dbReference type="KEGG" id="seh:SeHA_C4759"/>
<dbReference type="HOGENOM" id="CLU_156492_0_0_6"/>
<dbReference type="Proteomes" id="UP000001866">
    <property type="component" value="Chromosome"/>
</dbReference>
<dbReference type="GO" id="GO:0045283">
    <property type="term" value="C:fumarate reductase complex"/>
    <property type="evidence" value="ECO:0007669"/>
    <property type="project" value="UniProtKB-UniRule"/>
</dbReference>
<dbReference type="GO" id="GO:0005886">
    <property type="term" value="C:plasma membrane"/>
    <property type="evidence" value="ECO:0007669"/>
    <property type="project" value="UniProtKB-SubCell"/>
</dbReference>
<dbReference type="GO" id="GO:0000104">
    <property type="term" value="F:succinate dehydrogenase activity"/>
    <property type="evidence" value="ECO:0007669"/>
    <property type="project" value="UniProtKB-UniRule"/>
</dbReference>
<dbReference type="CDD" id="cd00546">
    <property type="entry name" value="QFR_TypeD_subunitC"/>
    <property type="match status" value="1"/>
</dbReference>
<dbReference type="Gene3D" id="1.20.1300.10">
    <property type="entry name" value="Fumarate reductase/succinate dehydrogenase, transmembrane subunit"/>
    <property type="match status" value="1"/>
</dbReference>
<dbReference type="HAMAP" id="MF_00708">
    <property type="entry name" value="Fumarate_red_C"/>
    <property type="match status" value="1"/>
</dbReference>
<dbReference type="InterPro" id="IPR003510">
    <property type="entry name" value="Fumarate_red_C"/>
</dbReference>
<dbReference type="InterPro" id="IPR034804">
    <property type="entry name" value="SQR/QFR_C/D"/>
</dbReference>
<dbReference type="NCBIfam" id="NF003445">
    <property type="entry name" value="PRK04987.1"/>
    <property type="match status" value="1"/>
</dbReference>
<dbReference type="Pfam" id="PF02300">
    <property type="entry name" value="Fumarate_red_C"/>
    <property type="match status" value="1"/>
</dbReference>
<dbReference type="PIRSF" id="PIRSF000180">
    <property type="entry name" value="FrdC"/>
    <property type="match status" value="1"/>
</dbReference>
<dbReference type="SUPFAM" id="SSF81343">
    <property type="entry name" value="Fumarate reductase respiratory complex transmembrane subunits"/>
    <property type="match status" value="1"/>
</dbReference>
<organism>
    <name type="scientific">Salmonella heidelberg (strain SL476)</name>
    <dbReference type="NCBI Taxonomy" id="454169"/>
    <lineage>
        <taxon>Bacteria</taxon>
        <taxon>Pseudomonadati</taxon>
        <taxon>Pseudomonadota</taxon>
        <taxon>Gammaproteobacteria</taxon>
        <taxon>Enterobacterales</taxon>
        <taxon>Enterobacteriaceae</taxon>
        <taxon>Salmonella</taxon>
    </lineage>
</organism>
<evidence type="ECO:0000255" key="1">
    <source>
        <dbReference type="HAMAP-Rule" id="MF_00708"/>
    </source>
</evidence>
<keyword id="KW-0997">Cell inner membrane</keyword>
<keyword id="KW-1003">Cell membrane</keyword>
<keyword id="KW-0472">Membrane</keyword>
<keyword id="KW-0812">Transmembrane</keyword>
<keyword id="KW-1133">Transmembrane helix</keyword>
<reference key="1">
    <citation type="journal article" date="2011" name="J. Bacteriol.">
        <title>Comparative genomics of 28 Salmonella enterica isolates: evidence for CRISPR-mediated adaptive sublineage evolution.</title>
        <authorList>
            <person name="Fricke W.F."/>
            <person name="Mammel M.K."/>
            <person name="McDermott P.F."/>
            <person name="Tartera C."/>
            <person name="White D.G."/>
            <person name="Leclerc J.E."/>
            <person name="Ravel J."/>
            <person name="Cebula T.A."/>
        </authorList>
    </citation>
    <scope>NUCLEOTIDE SEQUENCE [LARGE SCALE GENOMIC DNA]</scope>
    <source>
        <strain>SL476</strain>
    </source>
</reference>
<protein>
    <recommendedName>
        <fullName evidence="1">Fumarate reductase subunit C</fullName>
    </recommendedName>
    <alternativeName>
        <fullName evidence="1">Fumarate reductase 15 kDa hydrophobic protein</fullName>
    </alternativeName>
    <alternativeName>
        <fullName evidence="1">Quinol-fumarate reductase subunit C</fullName>
        <shortName evidence="1">QFR subunit C</shortName>
    </alternativeName>
</protein>
<proteinExistence type="inferred from homology"/>
<accession>B4TF89</accession>